<keyword id="KW-0067">ATP-binding</keyword>
<keyword id="KW-0997">Cell inner membrane</keyword>
<keyword id="KW-1003">Cell membrane</keyword>
<keyword id="KW-0418">Kinase</keyword>
<keyword id="KW-0448">Lipopolysaccharide biosynthesis</keyword>
<keyword id="KW-0472">Membrane</keyword>
<keyword id="KW-0547">Nucleotide-binding</keyword>
<keyword id="KW-1185">Reference proteome</keyword>
<keyword id="KW-0808">Transferase</keyword>
<sequence>MLEFKHKNTFFLFNFKQPKAQQACFFRSSFWKKQARILGSAQGRGVTWFLQTKDLFGVNAALKHYYRGGLWGKINRDYYRFSTLSNARSFAEFSLLKQLHEAGLAVPKPLGACVEKVAFGFYRADLLTEKIEHAQDLTVYLQQGKLTEQDWHKVGQLIHQLHSLQVCHTDLNAHNILVQQRDDGRKFWLIDFDKCAHQLGERWKSENLNRLHRSFMKEVTRMKIQFSEQDWQALLAGYQA</sequence>
<accession>Q9CLD5</accession>
<comment type="function">
    <text evidence="1">Catalyzes the ATP-dependent phosphorylation of the 3-deoxy-D-manno-octulosonic acid (Kdo) residue in Kdo-lipid IV(A) at the 4-OH position.</text>
</comment>
<comment type="catalytic activity">
    <reaction>
        <text>an alpha-Kdo-(2-&gt;6)-lipid IVA + ATP = a 4-O-phospho-alpha-Kdo-(2-&gt;6)-lipid IVA + ADP + H(+)</text>
        <dbReference type="Rhea" id="RHEA:74271"/>
        <dbReference type="ChEBI" id="CHEBI:15378"/>
        <dbReference type="ChEBI" id="CHEBI:30616"/>
        <dbReference type="ChEBI" id="CHEBI:176428"/>
        <dbReference type="ChEBI" id="CHEBI:193140"/>
        <dbReference type="ChEBI" id="CHEBI:456216"/>
        <dbReference type="EC" id="2.7.1.166"/>
    </reaction>
</comment>
<comment type="pathway">
    <text>Bacterial outer membrane biogenesis; LPS core biosynthesis.</text>
</comment>
<comment type="subcellular location">
    <subcellularLocation>
        <location evidence="1">Cell inner membrane</location>
        <topology evidence="1">Peripheral membrane protein</topology>
        <orientation evidence="1">Cytoplasmic side</orientation>
    </subcellularLocation>
</comment>
<comment type="similarity">
    <text evidence="3">Belongs to the protein kinase superfamily. KdkA/RfaP family.</text>
</comment>
<protein>
    <recommendedName>
        <fullName>3-deoxy-D-manno-octulosonic acid kinase</fullName>
        <shortName>Kdo kinase</shortName>
        <ecNumber>2.7.1.166</ecNumber>
    </recommendedName>
</protein>
<dbReference type="EC" id="2.7.1.166"/>
<dbReference type="EMBL" id="AE004439">
    <property type="protein sequence ID" value="AAK03387.1"/>
    <property type="molecule type" value="Genomic_DNA"/>
</dbReference>
<dbReference type="RefSeq" id="WP_005734735.1">
    <property type="nucleotide sequence ID" value="NC_002663.1"/>
</dbReference>
<dbReference type="STRING" id="272843.PM1303"/>
<dbReference type="EnsemblBacteria" id="AAK03387">
    <property type="protein sequence ID" value="AAK03387"/>
    <property type="gene ID" value="PM1303"/>
</dbReference>
<dbReference type="KEGG" id="pmu:PM1303"/>
<dbReference type="PATRIC" id="fig|272843.6.peg.1314"/>
<dbReference type="HOGENOM" id="CLU_094226_0_0_6"/>
<dbReference type="OrthoDB" id="6854449at2"/>
<dbReference type="UniPathway" id="UPA00958"/>
<dbReference type="Proteomes" id="UP000000809">
    <property type="component" value="Chromosome"/>
</dbReference>
<dbReference type="GO" id="GO:0005886">
    <property type="term" value="C:plasma membrane"/>
    <property type="evidence" value="ECO:0007669"/>
    <property type="project" value="UniProtKB-SubCell"/>
</dbReference>
<dbReference type="GO" id="GO:0005524">
    <property type="term" value="F:ATP binding"/>
    <property type="evidence" value="ECO:0007669"/>
    <property type="project" value="UniProtKB-UniRule"/>
</dbReference>
<dbReference type="GO" id="GO:0016301">
    <property type="term" value="F:kinase activity"/>
    <property type="evidence" value="ECO:0007669"/>
    <property type="project" value="UniProtKB-KW"/>
</dbReference>
<dbReference type="GO" id="GO:0016773">
    <property type="term" value="F:phosphotransferase activity, alcohol group as acceptor"/>
    <property type="evidence" value="ECO:0007669"/>
    <property type="project" value="UniProtKB-UniRule"/>
</dbReference>
<dbReference type="GO" id="GO:0009244">
    <property type="term" value="P:lipopolysaccharide core region biosynthetic process"/>
    <property type="evidence" value="ECO:0007669"/>
    <property type="project" value="UniProtKB-UniRule"/>
</dbReference>
<dbReference type="Gene3D" id="1.10.510.10">
    <property type="entry name" value="Transferase(Phosphotransferase) domain 1"/>
    <property type="match status" value="1"/>
</dbReference>
<dbReference type="HAMAP" id="MF_00521">
    <property type="entry name" value="KDO_kinase"/>
    <property type="match status" value="1"/>
</dbReference>
<dbReference type="InterPro" id="IPR022826">
    <property type="entry name" value="KDO_kinase"/>
</dbReference>
<dbReference type="InterPro" id="IPR011009">
    <property type="entry name" value="Kinase-like_dom_sf"/>
</dbReference>
<dbReference type="NCBIfam" id="NF002475">
    <property type="entry name" value="PRK01723.1"/>
    <property type="match status" value="1"/>
</dbReference>
<dbReference type="Pfam" id="PF06293">
    <property type="entry name" value="Kdo"/>
    <property type="match status" value="1"/>
</dbReference>
<dbReference type="SUPFAM" id="SSF56112">
    <property type="entry name" value="Protein kinase-like (PK-like)"/>
    <property type="match status" value="1"/>
</dbReference>
<feature type="chain" id="PRO_0000194314" description="3-deoxy-D-manno-octulosonic acid kinase">
    <location>
        <begin position="1"/>
        <end position="240"/>
    </location>
</feature>
<feature type="active site" evidence="2">
    <location>
        <position position="170"/>
    </location>
</feature>
<reference key="1">
    <citation type="journal article" date="2001" name="Proc. Natl. Acad. Sci. U.S.A.">
        <title>Complete genomic sequence of Pasteurella multocida Pm70.</title>
        <authorList>
            <person name="May B.J."/>
            <person name="Zhang Q."/>
            <person name="Li L.L."/>
            <person name="Paustian M.L."/>
            <person name="Whittam T.S."/>
            <person name="Kapur V."/>
        </authorList>
    </citation>
    <scope>NUCLEOTIDE SEQUENCE [LARGE SCALE GENOMIC DNA]</scope>
    <source>
        <strain>Pm70</strain>
    </source>
</reference>
<organism>
    <name type="scientific">Pasteurella multocida (strain Pm70)</name>
    <dbReference type="NCBI Taxonomy" id="272843"/>
    <lineage>
        <taxon>Bacteria</taxon>
        <taxon>Pseudomonadati</taxon>
        <taxon>Pseudomonadota</taxon>
        <taxon>Gammaproteobacteria</taxon>
        <taxon>Pasteurellales</taxon>
        <taxon>Pasteurellaceae</taxon>
        <taxon>Pasteurella</taxon>
    </lineage>
</organism>
<evidence type="ECO:0000250" key="1"/>
<evidence type="ECO:0000255" key="2"/>
<evidence type="ECO:0000305" key="3"/>
<name>KDKA_PASMU</name>
<gene>
    <name type="primary">kdkA</name>
    <name type="ordered locus">PM1303</name>
</gene>
<proteinExistence type="inferred from homology"/>